<protein>
    <recommendedName>
        <fullName>Ephrin-A2</fullName>
    </recommendedName>
    <alternativeName>
        <fullName>CEK7-ligand</fullName>
        <shortName>CEK7-L</shortName>
    </alternativeName>
    <alternativeName>
        <fullName>ELF-1</fullName>
    </alternativeName>
    <alternativeName>
        <fullName>EPH-related receptor tyrosine kinase ligand 6</fullName>
        <shortName>LERK-6</shortName>
    </alternativeName>
</protein>
<feature type="signal peptide" evidence="1">
    <location>
        <begin position="1"/>
        <end position="20"/>
    </location>
</feature>
<feature type="chain" id="PRO_0000008363" description="Ephrin-A2">
    <location>
        <begin position="21"/>
        <end position="184"/>
    </location>
</feature>
<feature type="propeptide" id="PRO_0000008364" description="Removed in mature form" evidence="1">
    <location>
        <begin position="185"/>
        <end position="209"/>
    </location>
</feature>
<feature type="domain" description="Ephrin RBD" evidence="2">
    <location>
        <begin position="30"/>
        <end position="170"/>
    </location>
</feature>
<feature type="lipid moiety-binding region" description="GPI-anchor amidated asparagine" evidence="1">
    <location>
        <position position="184"/>
    </location>
</feature>
<feature type="glycosylation site" description="N-linked (GlcNAc...) asparagine" evidence="1">
    <location>
        <position position="38"/>
    </location>
</feature>
<feature type="glycosylation site" description="N-linked (GlcNAc...) asparagine" evidence="1">
    <location>
        <position position="170"/>
    </location>
</feature>
<feature type="glycosylation site" description="N-linked (GlcNAc...) asparagine" evidence="1">
    <location>
        <position position="184"/>
    </location>
</feature>
<feature type="disulfide bond" evidence="2">
    <location>
        <begin position="69"/>
        <end position="110"/>
    </location>
</feature>
<feature type="disulfide bond" evidence="2">
    <location>
        <begin position="98"/>
        <end position="159"/>
    </location>
</feature>
<sequence>MAPAQRPLLPLLLLLLPLRARNEDPARANADRYAVYWNRSNPRFQVSAVGDGGGYTVEVSINDYLDIYCPHYGAPLPPAERMERYILYMVNGEGHASCDHRQRGFKRWECNRPAAPGGPLKFSEKFQLFTPFSLGFEFRPGHEYYYISATPPNLVDRPCLRLKVYVRPTNETLYEAPEPIFTSNSSCSGLGGCHLFLTTVPVLWSLLGS</sequence>
<name>EFNA2_MOUSE</name>
<comment type="function">
    <text evidence="3 5">Cell surface GPI-bound ligand for Eph receptors, a family of receptor tyrosine kinases which are crucial for migration, repulsion and adhesion during neuronal, vascular and epithelial development. Binds promiscuously Eph receptors residing on adjacent cells, leading to contact-dependent bidirectional signaling into neighboring cells. The signaling pathway downstream of the receptor is referred to as forward signaling while the signaling pathway downstream of the ephrin ligand is referred to as reverse signaling. With the EPHA2 receptor may play a role in bone remodeling through regulation of osteoclastogenesis and osteoblastogenesis.</text>
</comment>
<comment type="subunit">
    <text evidence="5">Binds to the receptor tyrosine kinases EPHA3, EPHA4 and EPHA5. Interacts with EPHA8; activates EPHA8.</text>
</comment>
<comment type="subcellular location">
    <subcellularLocation>
        <location evidence="6">Cell membrane</location>
        <topology evidence="6">Lipid-anchor</topology>
        <topology evidence="6">GPI-anchor</topology>
    </subcellularLocation>
</comment>
<comment type="tissue specificity">
    <text evidence="4">Expressed in myogenic progenitor cells.</text>
</comment>
<comment type="developmental stage">
    <text evidence="4">In myogenic progenitor cells, highly expressed, at least as early as 11.5 dpc, expression decreases gradually until adulthood.</text>
</comment>
<comment type="similarity">
    <text evidence="2">Belongs to the ephrin family.</text>
</comment>
<evidence type="ECO:0000255" key="1"/>
<evidence type="ECO:0000255" key="2">
    <source>
        <dbReference type="PROSITE-ProRule" id="PRU00884"/>
    </source>
</evidence>
<evidence type="ECO:0000269" key="3">
    <source>
    </source>
</evidence>
<evidence type="ECO:0000269" key="4">
    <source>
    </source>
</evidence>
<evidence type="ECO:0000269" key="5">
    <source>
    </source>
</evidence>
<evidence type="ECO:0000305" key="6"/>
<dbReference type="EMBL" id="U14941">
    <property type="protein sequence ID" value="AAA53636.1"/>
    <property type="molecule type" value="mRNA"/>
</dbReference>
<dbReference type="EMBL" id="U14752">
    <property type="protein sequence ID" value="AAA68520.1"/>
    <property type="molecule type" value="mRNA"/>
</dbReference>
<dbReference type="EMBL" id="BC048697">
    <property type="protein sequence ID" value="AAH48697.1"/>
    <property type="molecule type" value="mRNA"/>
</dbReference>
<dbReference type="CCDS" id="CCDS24013.1"/>
<dbReference type="PIR" id="A54984">
    <property type="entry name" value="A54984"/>
</dbReference>
<dbReference type="RefSeq" id="NP_031935.3">
    <property type="nucleotide sequence ID" value="NM_007909.3"/>
</dbReference>
<dbReference type="SMR" id="P52801"/>
<dbReference type="FunCoup" id="P52801">
    <property type="interactions" value="731"/>
</dbReference>
<dbReference type="STRING" id="10090.ENSMUSP00000003154"/>
<dbReference type="GlyCosmos" id="P52801">
    <property type="glycosylation" value="3 sites, No reported glycans"/>
</dbReference>
<dbReference type="GlyGen" id="P52801">
    <property type="glycosylation" value="3 sites, 1 N-linked glycan (1 site)"/>
</dbReference>
<dbReference type="PhosphoSitePlus" id="P52801"/>
<dbReference type="PaxDb" id="10090-ENSMUSP00000003154"/>
<dbReference type="ProteomicsDB" id="277800"/>
<dbReference type="Antibodypedia" id="3919">
    <property type="antibodies" value="421 antibodies from 31 providers"/>
</dbReference>
<dbReference type="DNASU" id="13637"/>
<dbReference type="Ensembl" id="ENSMUST00000003154.7">
    <property type="protein sequence ID" value="ENSMUSP00000003154.6"/>
    <property type="gene ID" value="ENSMUSG00000003070.7"/>
</dbReference>
<dbReference type="GeneID" id="13637"/>
<dbReference type="KEGG" id="mmu:13637"/>
<dbReference type="UCSC" id="uc007gcg.2">
    <property type="organism name" value="mouse"/>
</dbReference>
<dbReference type="AGR" id="MGI:102707"/>
<dbReference type="CTD" id="1943"/>
<dbReference type="MGI" id="MGI:102707">
    <property type="gene designation" value="Efna2"/>
</dbReference>
<dbReference type="VEuPathDB" id="HostDB:ENSMUSG00000003070"/>
<dbReference type="eggNOG" id="KOG3858">
    <property type="taxonomic scope" value="Eukaryota"/>
</dbReference>
<dbReference type="GeneTree" id="ENSGT00940000160040"/>
<dbReference type="HOGENOM" id="CLU_081598_3_1_1"/>
<dbReference type="InParanoid" id="P52801"/>
<dbReference type="OMA" id="HMEHYVL"/>
<dbReference type="OrthoDB" id="6250301at2759"/>
<dbReference type="PhylomeDB" id="P52801"/>
<dbReference type="Reactome" id="R-MMU-2682334">
    <property type="pathway name" value="EPH-Ephrin signaling"/>
</dbReference>
<dbReference type="Reactome" id="R-MMU-3928663">
    <property type="pathway name" value="EPHA-mediated growth cone collapse"/>
</dbReference>
<dbReference type="Reactome" id="R-MMU-3928665">
    <property type="pathway name" value="EPH-ephrin mediated repulsion of cells"/>
</dbReference>
<dbReference type="BioGRID-ORCS" id="13637">
    <property type="hits" value="7 hits in 80 CRISPR screens"/>
</dbReference>
<dbReference type="ChiTaRS" id="Efna2">
    <property type="organism name" value="mouse"/>
</dbReference>
<dbReference type="PRO" id="PR:P52801"/>
<dbReference type="Proteomes" id="UP000000589">
    <property type="component" value="Chromosome 10"/>
</dbReference>
<dbReference type="RNAct" id="P52801">
    <property type="molecule type" value="protein"/>
</dbReference>
<dbReference type="Bgee" id="ENSMUSG00000003070">
    <property type="expression patterns" value="Expressed in floor plate of midbrain and 210 other cell types or tissues"/>
</dbReference>
<dbReference type="GO" id="GO:0031594">
    <property type="term" value="C:neuromuscular junction"/>
    <property type="evidence" value="ECO:0007669"/>
    <property type="project" value="Ensembl"/>
</dbReference>
<dbReference type="GO" id="GO:0043204">
    <property type="term" value="C:perikaryon"/>
    <property type="evidence" value="ECO:0007669"/>
    <property type="project" value="Ensembl"/>
</dbReference>
<dbReference type="GO" id="GO:0005886">
    <property type="term" value="C:plasma membrane"/>
    <property type="evidence" value="ECO:0000304"/>
    <property type="project" value="Reactome"/>
</dbReference>
<dbReference type="GO" id="GO:0098552">
    <property type="term" value="C:side of membrane"/>
    <property type="evidence" value="ECO:0007669"/>
    <property type="project" value="UniProtKB-KW"/>
</dbReference>
<dbReference type="GO" id="GO:0046875">
    <property type="term" value="F:ephrin receptor binding"/>
    <property type="evidence" value="ECO:0000353"/>
    <property type="project" value="UniProtKB"/>
</dbReference>
<dbReference type="GO" id="GO:0007411">
    <property type="term" value="P:axon guidance"/>
    <property type="evidence" value="ECO:0007669"/>
    <property type="project" value="Ensembl"/>
</dbReference>
<dbReference type="GO" id="GO:0046849">
    <property type="term" value="P:bone remodeling"/>
    <property type="evidence" value="ECO:0000314"/>
    <property type="project" value="UniProtKB"/>
</dbReference>
<dbReference type="GO" id="GO:0048013">
    <property type="term" value="P:ephrin receptor signaling pathway"/>
    <property type="evidence" value="ECO:0000314"/>
    <property type="project" value="UniProtKB"/>
</dbReference>
<dbReference type="GO" id="GO:0021772">
    <property type="term" value="P:olfactory bulb development"/>
    <property type="evidence" value="ECO:0007669"/>
    <property type="project" value="Ensembl"/>
</dbReference>
<dbReference type="GO" id="GO:0030316">
    <property type="term" value="P:osteoclast differentiation"/>
    <property type="evidence" value="ECO:0000314"/>
    <property type="project" value="UniProtKB"/>
</dbReference>
<dbReference type="CDD" id="cd10425">
    <property type="entry name" value="Ephrin-A_Ectodomain"/>
    <property type="match status" value="1"/>
</dbReference>
<dbReference type="FunFam" id="2.60.40.420:FF:000005">
    <property type="entry name" value="Ephrin A5"/>
    <property type="match status" value="1"/>
</dbReference>
<dbReference type="Gene3D" id="2.60.40.420">
    <property type="entry name" value="Cupredoxins - blue copper proteins"/>
    <property type="match status" value="1"/>
</dbReference>
<dbReference type="InterPro" id="IPR008972">
    <property type="entry name" value="Cupredoxin"/>
</dbReference>
<dbReference type="InterPro" id="IPR031328">
    <property type="entry name" value="Ephrin"/>
</dbReference>
<dbReference type="InterPro" id="IPR034252">
    <property type="entry name" value="Ephrin-A_Ecto"/>
</dbReference>
<dbReference type="InterPro" id="IPR019765">
    <property type="entry name" value="Ephrin_CS"/>
</dbReference>
<dbReference type="InterPro" id="IPR001799">
    <property type="entry name" value="Ephrin_RBD"/>
</dbReference>
<dbReference type="PANTHER" id="PTHR11304">
    <property type="entry name" value="EPHRIN"/>
    <property type="match status" value="1"/>
</dbReference>
<dbReference type="PANTHER" id="PTHR11304:SF4">
    <property type="entry name" value="EPHRIN-A2"/>
    <property type="match status" value="1"/>
</dbReference>
<dbReference type="Pfam" id="PF00812">
    <property type="entry name" value="Ephrin"/>
    <property type="match status" value="1"/>
</dbReference>
<dbReference type="PRINTS" id="PR01347">
    <property type="entry name" value="EPHRIN"/>
</dbReference>
<dbReference type="SUPFAM" id="SSF49503">
    <property type="entry name" value="Cupredoxins"/>
    <property type="match status" value="1"/>
</dbReference>
<dbReference type="PROSITE" id="PS01299">
    <property type="entry name" value="EPHRIN_RBD_1"/>
    <property type="match status" value="1"/>
</dbReference>
<dbReference type="PROSITE" id="PS51551">
    <property type="entry name" value="EPHRIN_RBD_2"/>
    <property type="match status" value="1"/>
</dbReference>
<accession>P52801</accession>
<keyword id="KW-1003">Cell membrane</keyword>
<keyword id="KW-1015">Disulfide bond</keyword>
<keyword id="KW-0325">Glycoprotein</keyword>
<keyword id="KW-0336">GPI-anchor</keyword>
<keyword id="KW-0449">Lipoprotein</keyword>
<keyword id="KW-0472">Membrane</keyword>
<keyword id="KW-1185">Reference proteome</keyword>
<keyword id="KW-0732">Signal</keyword>
<gene>
    <name type="primary">Efna2</name>
    <name type="synonym">Elf1</name>
    <name type="synonym">Epl6</name>
    <name type="synonym">Eplg6</name>
    <name type="synonym">Lerk6</name>
</gene>
<proteinExistence type="evidence at protein level"/>
<reference key="1">
    <citation type="journal article" date="1994" name="Cell">
        <title>Identification and cloning of ELF-1, a developmentally expressed ligand for the Mek4 and Sek receptor tyrosine kinases.</title>
        <authorList>
            <person name="Cheng H.J."/>
            <person name="Flanagan J.G."/>
        </authorList>
    </citation>
    <scope>NUCLEOTIDE SEQUENCE [MRNA]</scope>
    <source>
        <strain>Swiss Webster</strain>
        <tissue>Brain</tissue>
    </source>
</reference>
<reference key="2">
    <citation type="journal article" date="1995" name="J. Biol. Chem.">
        <title>cDNA cloning and characterization of a Cek7 receptor protein-tyrosine kinase ligand that is identical to the ligand (ELF-1) for the Mek-4 and Sek receptor protein-tyrosine kinases.</title>
        <authorList>
            <person name="Shao H."/>
            <person name="Lou L."/>
            <person name="Pandey A."/>
            <person name="Verderame M.F."/>
            <person name="Siever D.A."/>
            <person name="Dixit V.M."/>
        </authorList>
    </citation>
    <scope>NUCLEOTIDE SEQUENCE [MRNA]</scope>
    <source>
        <tissue>Brain</tissue>
    </source>
</reference>
<reference key="3">
    <citation type="journal article" date="2004" name="Genome Res.">
        <title>The status, quality, and expansion of the NIH full-length cDNA project: the Mammalian Gene Collection (MGC).</title>
        <authorList>
            <consortium name="The MGC Project Team"/>
        </authorList>
    </citation>
    <scope>NUCLEOTIDE SEQUENCE [LARGE SCALE MRNA]</scope>
    <source>
        <tissue>Limb</tissue>
    </source>
</reference>
<reference key="4">
    <citation type="journal article" date="1997" name="Oncogene">
        <title>The Eek receptor, a member of the Eph family of tyrosine protein kinases, can be activated by three different Eph family ligands.</title>
        <authorList>
            <person name="Park S."/>
            <person name="Sanchez M.P."/>
        </authorList>
    </citation>
    <scope>FUNCTION IN EPHA8 ACTIVATION</scope>
    <scope>INTERACTION WITH EPHA8</scope>
</reference>
<reference key="5">
    <citation type="journal article" date="2009" name="J. Biol. Chem.">
        <title>Bidirectional signaling through ephrinA2-EphA2 enhances osteoclastogenesis and suppresses osteoblastogenesis.</title>
        <authorList>
            <person name="Irie N."/>
            <person name="Takada Y."/>
            <person name="Watanabe Y."/>
            <person name="Matsuzaki Y."/>
            <person name="Naruse C."/>
            <person name="Asano M."/>
            <person name="Iwakura Y."/>
            <person name="Suda T."/>
            <person name="Matsuo K."/>
        </authorList>
    </citation>
    <scope>FUNCTION IN BONE REMODELING</scope>
</reference>
<reference key="6">
    <citation type="journal article" date="2016" name="Front. Cell Dev. Biol.">
        <title>Gene expression profiling of muscle stem cells identifies novel regulators of postnatal myogenesis.</title>
        <authorList>
            <person name="Alonso-Martin S."/>
            <person name="Rochat A."/>
            <person name="Mademtzoglou D."/>
            <person name="Morais J."/>
            <person name="de Reynies A."/>
            <person name="Aurade F."/>
            <person name="Chang T.H."/>
            <person name="Zammit P.S."/>
            <person name="Relaix F."/>
        </authorList>
    </citation>
    <scope>DEVELOPMENTAL STAGE</scope>
    <scope>TISSUE SPECIFICITY</scope>
</reference>
<organism>
    <name type="scientific">Mus musculus</name>
    <name type="common">Mouse</name>
    <dbReference type="NCBI Taxonomy" id="10090"/>
    <lineage>
        <taxon>Eukaryota</taxon>
        <taxon>Metazoa</taxon>
        <taxon>Chordata</taxon>
        <taxon>Craniata</taxon>
        <taxon>Vertebrata</taxon>
        <taxon>Euteleostomi</taxon>
        <taxon>Mammalia</taxon>
        <taxon>Eutheria</taxon>
        <taxon>Euarchontoglires</taxon>
        <taxon>Glires</taxon>
        <taxon>Rodentia</taxon>
        <taxon>Myomorpha</taxon>
        <taxon>Muroidea</taxon>
        <taxon>Muridae</taxon>
        <taxon>Murinae</taxon>
        <taxon>Mus</taxon>
        <taxon>Mus</taxon>
    </lineage>
</organism>